<gene>
    <name evidence="1" type="primary">rplW</name>
    <name type="ordered locus">PMI3257</name>
</gene>
<proteinExistence type="inferred from homology"/>
<accession>B4F1I6</accession>
<protein>
    <recommendedName>
        <fullName evidence="1">Large ribosomal subunit protein uL23</fullName>
    </recommendedName>
    <alternativeName>
        <fullName evidence="2">50S ribosomal protein L23</fullName>
    </alternativeName>
</protein>
<sequence>MIREERLLKVLRAPHVSEKASIAMEKSNTIVLKVAKDATKAEIKAAVQKLFEVEVESVNTLLMKGKVKRHGQRIGRRSDWKKAYVTLKEGQNLDFVGGAE</sequence>
<organism>
    <name type="scientific">Proteus mirabilis (strain HI4320)</name>
    <dbReference type="NCBI Taxonomy" id="529507"/>
    <lineage>
        <taxon>Bacteria</taxon>
        <taxon>Pseudomonadati</taxon>
        <taxon>Pseudomonadota</taxon>
        <taxon>Gammaproteobacteria</taxon>
        <taxon>Enterobacterales</taxon>
        <taxon>Morganellaceae</taxon>
        <taxon>Proteus</taxon>
    </lineage>
</organism>
<dbReference type="EMBL" id="AM942759">
    <property type="protein sequence ID" value="CAR46383.1"/>
    <property type="molecule type" value="Genomic_DNA"/>
</dbReference>
<dbReference type="RefSeq" id="WP_004246962.1">
    <property type="nucleotide sequence ID" value="NC_010554.1"/>
</dbReference>
<dbReference type="SMR" id="B4F1I6"/>
<dbReference type="EnsemblBacteria" id="CAR46383">
    <property type="protein sequence ID" value="CAR46383"/>
    <property type="gene ID" value="PMI3257"/>
</dbReference>
<dbReference type="GeneID" id="93396002"/>
<dbReference type="KEGG" id="pmr:PMI3257"/>
<dbReference type="eggNOG" id="COG0089">
    <property type="taxonomic scope" value="Bacteria"/>
</dbReference>
<dbReference type="HOGENOM" id="CLU_037562_3_1_6"/>
<dbReference type="Proteomes" id="UP000008319">
    <property type="component" value="Chromosome"/>
</dbReference>
<dbReference type="GO" id="GO:1990904">
    <property type="term" value="C:ribonucleoprotein complex"/>
    <property type="evidence" value="ECO:0007669"/>
    <property type="project" value="UniProtKB-KW"/>
</dbReference>
<dbReference type="GO" id="GO:0005840">
    <property type="term" value="C:ribosome"/>
    <property type="evidence" value="ECO:0007669"/>
    <property type="project" value="UniProtKB-KW"/>
</dbReference>
<dbReference type="GO" id="GO:0019843">
    <property type="term" value="F:rRNA binding"/>
    <property type="evidence" value="ECO:0007669"/>
    <property type="project" value="UniProtKB-UniRule"/>
</dbReference>
<dbReference type="GO" id="GO:0003735">
    <property type="term" value="F:structural constituent of ribosome"/>
    <property type="evidence" value="ECO:0007669"/>
    <property type="project" value="InterPro"/>
</dbReference>
<dbReference type="GO" id="GO:0006412">
    <property type="term" value="P:translation"/>
    <property type="evidence" value="ECO:0007669"/>
    <property type="project" value="UniProtKB-UniRule"/>
</dbReference>
<dbReference type="FunFam" id="3.30.70.330:FF:000001">
    <property type="entry name" value="50S ribosomal protein L23"/>
    <property type="match status" value="1"/>
</dbReference>
<dbReference type="Gene3D" id="3.30.70.330">
    <property type="match status" value="1"/>
</dbReference>
<dbReference type="HAMAP" id="MF_01369_B">
    <property type="entry name" value="Ribosomal_uL23_B"/>
    <property type="match status" value="1"/>
</dbReference>
<dbReference type="InterPro" id="IPR012677">
    <property type="entry name" value="Nucleotide-bd_a/b_plait_sf"/>
</dbReference>
<dbReference type="InterPro" id="IPR013025">
    <property type="entry name" value="Ribosomal_uL23-like"/>
</dbReference>
<dbReference type="InterPro" id="IPR012678">
    <property type="entry name" value="Ribosomal_uL23/eL15/eS24_sf"/>
</dbReference>
<dbReference type="InterPro" id="IPR001014">
    <property type="entry name" value="Ribosomal_uL23_CS"/>
</dbReference>
<dbReference type="NCBIfam" id="NF004358">
    <property type="entry name" value="PRK05738.1-1"/>
    <property type="match status" value="1"/>
</dbReference>
<dbReference type="NCBIfam" id="NF004359">
    <property type="entry name" value="PRK05738.1-3"/>
    <property type="match status" value="1"/>
</dbReference>
<dbReference type="NCBIfam" id="NF004363">
    <property type="entry name" value="PRK05738.2-4"/>
    <property type="match status" value="1"/>
</dbReference>
<dbReference type="PANTHER" id="PTHR11620">
    <property type="entry name" value="60S RIBOSOMAL PROTEIN L23A"/>
    <property type="match status" value="1"/>
</dbReference>
<dbReference type="Pfam" id="PF00276">
    <property type="entry name" value="Ribosomal_L23"/>
    <property type="match status" value="1"/>
</dbReference>
<dbReference type="SUPFAM" id="SSF54189">
    <property type="entry name" value="Ribosomal proteins S24e, L23 and L15e"/>
    <property type="match status" value="1"/>
</dbReference>
<dbReference type="PROSITE" id="PS00050">
    <property type="entry name" value="RIBOSOMAL_L23"/>
    <property type="match status" value="1"/>
</dbReference>
<name>RL23_PROMH</name>
<reference key="1">
    <citation type="journal article" date="2008" name="J. Bacteriol.">
        <title>Complete genome sequence of uropathogenic Proteus mirabilis, a master of both adherence and motility.</title>
        <authorList>
            <person name="Pearson M.M."/>
            <person name="Sebaihia M."/>
            <person name="Churcher C."/>
            <person name="Quail M.A."/>
            <person name="Seshasayee A.S."/>
            <person name="Luscombe N.M."/>
            <person name="Abdellah Z."/>
            <person name="Arrosmith C."/>
            <person name="Atkin B."/>
            <person name="Chillingworth T."/>
            <person name="Hauser H."/>
            <person name="Jagels K."/>
            <person name="Moule S."/>
            <person name="Mungall K."/>
            <person name="Norbertczak H."/>
            <person name="Rabbinowitsch E."/>
            <person name="Walker D."/>
            <person name="Whithead S."/>
            <person name="Thomson N.R."/>
            <person name="Rather P.N."/>
            <person name="Parkhill J."/>
            <person name="Mobley H.L.T."/>
        </authorList>
    </citation>
    <scope>NUCLEOTIDE SEQUENCE [LARGE SCALE GENOMIC DNA]</scope>
    <source>
        <strain>HI4320</strain>
    </source>
</reference>
<feature type="chain" id="PRO_1000144599" description="Large ribosomal subunit protein uL23">
    <location>
        <begin position="1"/>
        <end position="100"/>
    </location>
</feature>
<comment type="function">
    <text evidence="1">One of the early assembly proteins it binds 23S rRNA. One of the proteins that surrounds the polypeptide exit tunnel on the outside of the ribosome. Forms the main docking site for trigger factor binding to the ribosome.</text>
</comment>
<comment type="subunit">
    <text evidence="1">Part of the 50S ribosomal subunit. Contacts protein L29, and trigger factor when it is bound to the ribosome.</text>
</comment>
<comment type="similarity">
    <text evidence="1">Belongs to the universal ribosomal protein uL23 family.</text>
</comment>
<keyword id="KW-1185">Reference proteome</keyword>
<keyword id="KW-0687">Ribonucleoprotein</keyword>
<keyword id="KW-0689">Ribosomal protein</keyword>
<keyword id="KW-0694">RNA-binding</keyword>
<keyword id="KW-0699">rRNA-binding</keyword>
<evidence type="ECO:0000255" key="1">
    <source>
        <dbReference type="HAMAP-Rule" id="MF_01369"/>
    </source>
</evidence>
<evidence type="ECO:0000305" key="2"/>